<name>OSTC2_DIPSG</name>
<keyword id="KW-0091">Biomineralization</keyword>
<keyword id="KW-0106">Calcium</keyword>
<keyword id="KW-0903">Direct protein sequencing</keyword>
<keyword id="KW-1015">Disulfide bond</keyword>
<keyword id="KW-0301">Gamma-carboxyglutamic acid</keyword>
<keyword id="KW-0372">Hormone</keyword>
<keyword id="KW-0479">Metal-binding</keyword>
<keyword id="KW-0964">Secreted</keyword>
<keyword id="KW-0732">Signal</keyword>
<proteinExistence type="evidence at protein level"/>
<accession>K7NTD0</accession>
<accession>P86866</accession>
<feature type="signal peptide" evidence="4">
    <location>
        <begin position="1"/>
        <end position="18"/>
    </location>
</feature>
<feature type="propeptide" id="PRO_0000436920" evidence="9">
    <location>
        <begin position="19"/>
        <end position="209"/>
    </location>
</feature>
<feature type="chain" id="PRO_5003911395" description="Osteocalcin 2" evidence="8">
    <location>
        <begin position="210"/>
        <end position="256"/>
    </location>
</feature>
<feature type="domain" description="Gla" evidence="5">
    <location>
        <begin position="218"/>
        <end position="252"/>
    </location>
</feature>
<feature type="region of interest" description="Disordered" evidence="6">
    <location>
        <begin position="38"/>
        <end position="193"/>
    </location>
</feature>
<feature type="compositionally biased region" description="Low complexity" evidence="6">
    <location>
        <begin position="38"/>
        <end position="186"/>
    </location>
</feature>
<feature type="binding site" evidence="1">
    <location>
        <position position="222"/>
    </location>
    <ligand>
        <name>Ca(2+)</name>
        <dbReference type="ChEBI" id="CHEBI:29108"/>
        <label>3</label>
    </ligand>
</feature>
<feature type="binding site" evidence="1">
    <location>
        <position position="226"/>
    </location>
    <ligand>
        <name>Ca(2+)</name>
        <dbReference type="ChEBI" id="CHEBI:29108"/>
        <label>2</label>
    </ligand>
</feature>
<feature type="binding site" evidence="1">
    <location>
        <position position="229"/>
    </location>
    <ligand>
        <name>Ca(2+)</name>
        <dbReference type="ChEBI" id="CHEBI:29108"/>
        <label>1</label>
    </ligand>
</feature>
<feature type="binding site" evidence="1">
    <location>
        <position position="229"/>
    </location>
    <ligand>
        <name>Ca(2+)</name>
        <dbReference type="ChEBI" id="CHEBI:29108"/>
        <label>2</label>
    </ligand>
</feature>
<feature type="binding site" evidence="1">
    <location>
        <position position="235"/>
    </location>
    <ligand>
        <name>Ca(2+)</name>
        <dbReference type="ChEBI" id="CHEBI:29108"/>
        <label>1</label>
    </ligand>
</feature>
<feature type="modified residue" description="4-carboxyglutamate" evidence="3">
    <location>
        <position position="222"/>
    </location>
</feature>
<feature type="modified residue" description="4-carboxyglutamate" evidence="5">
    <location>
        <position position="226"/>
    </location>
</feature>
<feature type="modified residue" description="4-carboxyglutamate" evidence="5">
    <location>
        <position position="229"/>
    </location>
</feature>
<feature type="modified residue" description="4-carboxyglutamate" evidence="3">
    <location>
        <position position="236"/>
    </location>
</feature>
<feature type="disulfide bond" evidence="5">
    <location>
        <begin position="228"/>
        <end position="234"/>
    </location>
</feature>
<evidence type="ECO:0000250" key="1">
    <source>
        <dbReference type="UniProtKB" id="P02820"/>
    </source>
</evidence>
<evidence type="ECO:0000250" key="2">
    <source>
        <dbReference type="UniProtKB" id="P86546"/>
    </source>
</evidence>
<evidence type="ECO:0000250" key="3">
    <source>
        <dbReference type="UniProtKB" id="Q800Y1"/>
    </source>
</evidence>
<evidence type="ECO:0000255" key="4"/>
<evidence type="ECO:0000255" key="5">
    <source>
        <dbReference type="PROSITE-ProRule" id="PRU00463"/>
    </source>
</evidence>
<evidence type="ECO:0000256" key="6">
    <source>
        <dbReference type="SAM" id="MobiDB-lite"/>
    </source>
</evidence>
<evidence type="ECO:0000303" key="7">
    <source>
    </source>
</evidence>
<evidence type="ECO:0000305" key="8"/>
<evidence type="ECO:0000305" key="9">
    <source>
    </source>
</evidence>
<evidence type="ECO:0000312" key="10">
    <source>
        <dbReference type="EMBL" id="AEX16052.1"/>
    </source>
</evidence>
<dbReference type="EMBL" id="JQ013105">
    <property type="protein sequence ID" value="AEX16052.1"/>
    <property type="molecule type" value="mRNA"/>
</dbReference>
<dbReference type="SMR" id="K7NTD0"/>
<dbReference type="GO" id="GO:0005576">
    <property type="term" value="C:extracellular region"/>
    <property type="evidence" value="ECO:0007669"/>
    <property type="project" value="UniProtKB-SubCell"/>
</dbReference>
<dbReference type="GO" id="GO:0005509">
    <property type="term" value="F:calcium ion binding"/>
    <property type="evidence" value="ECO:0007669"/>
    <property type="project" value="InterPro"/>
</dbReference>
<dbReference type="GO" id="GO:0005179">
    <property type="term" value="F:hormone activity"/>
    <property type="evidence" value="ECO:0000250"/>
    <property type="project" value="UniProtKB"/>
</dbReference>
<dbReference type="GO" id="GO:0046848">
    <property type="term" value="F:hydroxyapatite binding"/>
    <property type="evidence" value="ECO:0007669"/>
    <property type="project" value="TreeGrafter"/>
</dbReference>
<dbReference type="GO" id="GO:0008147">
    <property type="term" value="F:structural constituent of bone"/>
    <property type="evidence" value="ECO:0000250"/>
    <property type="project" value="UniProtKB"/>
</dbReference>
<dbReference type="GO" id="GO:0031214">
    <property type="term" value="P:biomineral tissue development"/>
    <property type="evidence" value="ECO:0007669"/>
    <property type="project" value="UniProtKB-KW"/>
</dbReference>
<dbReference type="GO" id="GO:0060348">
    <property type="term" value="P:bone development"/>
    <property type="evidence" value="ECO:0007669"/>
    <property type="project" value="InterPro"/>
</dbReference>
<dbReference type="GO" id="GO:0032869">
    <property type="term" value="P:cellular response to insulin stimulus"/>
    <property type="evidence" value="ECO:0000250"/>
    <property type="project" value="UniProtKB"/>
</dbReference>
<dbReference type="GO" id="GO:0042593">
    <property type="term" value="P:glucose homeostasis"/>
    <property type="evidence" value="ECO:0000250"/>
    <property type="project" value="UniProtKB"/>
</dbReference>
<dbReference type="GO" id="GO:1903011">
    <property type="term" value="P:negative regulation of bone development"/>
    <property type="evidence" value="ECO:0000250"/>
    <property type="project" value="UniProtKB"/>
</dbReference>
<dbReference type="GO" id="GO:0001649">
    <property type="term" value="P:osteoblast differentiation"/>
    <property type="evidence" value="ECO:0007669"/>
    <property type="project" value="TreeGrafter"/>
</dbReference>
<dbReference type="GO" id="GO:1900076">
    <property type="term" value="P:regulation of cellular response to insulin stimulus"/>
    <property type="evidence" value="ECO:0007669"/>
    <property type="project" value="InterPro"/>
</dbReference>
<dbReference type="GO" id="GO:0032571">
    <property type="term" value="P:response to vitamin K"/>
    <property type="evidence" value="ECO:0007669"/>
    <property type="project" value="InterPro"/>
</dbReference>
<dbReference type="GO" id="GO:0044342">
    <property type="term" value="P:type B pancreatic cell proliferation"/>
    <property type="evidence" value="ECO:0000250"/>
    <property type="project" value="UniProtKB"/>
</dbReference>
<dbReference type="InterPro" id="IPR035972">
    <property type="entry name" value="GLA-like_dom_SF"/>
</dbReference>
<dbReference type="InterPro" id="IPR000294">
    <property type="entry name" value="GLA_domain"/>
</dbReference>
<dbReference type="InterPro" id="IPR039176">
    <property type="entry name" value="Osteocalcin"/>
</dbReference>
<dbReference type="PANTHER" id="PTHR14235">
    <property type="entry name" value="OSTEOCALCIN"/>
    <property type="match status" value="1"/>
</dbReference>
<dbReference type="PANTHER" id="PTHR14235:SF0">
    <property type="entry name" value="OSTEOCALCIN"/>
    <property type="match status" value="1"/>
</dbReference>
<dbReference type="SMART" id="SM00069">
    <property type="entry name" value="GLA"/>
    <property type="match status" value="1"/>
</dbReference>
<dbReference type="SUPFAM" id="SSF57630">
    <property type="entry name" value="GLA-domain"/>
    <property type="match status" value="1"/>
</dbReference>
<dbReference type="PROSITE" id="PS00011">
    <property type="entry name" value="GLA_1"/>
    <property type="match status" value="1"/>
</dbReference>
<dbReference type="PROSITE" id="PS50998">
    <property type="entry name" value="GLA_2"/>
    <property type="match status" value="1"/>
</dbReference>
<sequence>MKTLVLLSICALLSVCWSMGAVEPEVVVDTVADTTADAAPADPAAAAAPSSSSSESSESSESSESSESSESSESSESSESNSSSASDSNSSSDSSASDSNSSSDSSSSSSSSSSSSSSSSSSSESTESSESSESSSSSSSSSSSSSSSSSSSSSESSSSESNSADSSASDSPSSSSSSSSSSSSESASDEAAKVVVKRDLASVLLRRRRAAPGGDLTPLQLESLREVCELNIACDEMAETAGIVAAYVAYYGPVPF</sequence>
<organism evidence="10">
    <name type="scientific">Diplodus sargus</name>
    <name type="common">White seabream</name>
    <dbReference type="NCBI Taxonomy" id="38941"/>
    <lineage>
        <taxon>Eukaryota</taxon>
        <taxon>Metazoa</taxon>
        <taxon>Chordata</taxon>
        <taxon>Craniata</taxon>
        <taxon>Vertebrata</taxon>
        <taxon>Euteleostomi</taxon>
        <taxon>Actinopterygii</taxon>
        <taxon>Neopterygii</taxon>
        <taxon>Teleostei</taxon>
        <taxon>Neoteleostei</taxon>
        <taxon>Acanthomorphata</taxon>
        <taxon>Eupercaria</taxon>
        <taxon>Spariformes</taxon>
        <taxon>Sparidae</taxon>
        <taxon>Diplodus</taxon>
    </lineage>
</organism>
<reference evidence="8" key="1">
    <citation type="journal article" date="2014" name="Fish Physiol. Biochem.">
        <title>Teleost fish osteocalcin 1 and 2 share the ability to bind the calcium mineral phase.</title>
        <authorList>
            <person name="Cavaco S."/>
            <person name="Williamson M.K."/>
            <person name="Rosa J."/>
            <person name="Roberto V."/>
            <person name="Cordeiro O."/>
            <person name="Price P.A."/>
            <person name="Leonor Cancela M."/>
            <person name="Laize V."/>
            <person name="Simes D.C."/>
        </authorList>
    </citation>
    <scope>NUCLEOTIDE SEQUENCE [MRNA]</scope>
    <scope>PROTEIN SEQUENCE OF 210-255</scope>
    <source>
        <tissue evidence="7">Bone</tissue>
    </source>
</reference>
<protein>
    <recommendedName>
        <fullName evidence="10">Osteocalcin 2</fullName>
        <shortName evidence="7">DsaOC2</shortName>
    </recommendedName>
    <alternativeName>
        <fullName evidence="7">Bone Gla protein</fullName>
        <shortName evidence="3">BGP</shortName>
    </alternativeName>
    <alternativeName>
        <fullName evidence="3">Gamma-carboxyglutamic acid-containing protein</fullName>
    </alternativeName>
</protein>
<comment type="function">
    <text evidence="2">The carboxylated form is one of the main organic components of the bone matrix, which constitutes 1-2% of the total bone protein (By similarity). The carboxylated form binds strongly to apatite and calcium (By similarity).</text>
</comment>
<comment type="subcellular location">
    <subcellularLocation>
        <location evidence="2">Secreted</location>
    </subcellularLocation>
</comment>
<comment type="PTM">
    <text evidence="5">Gamma-carboxyglutamate residues are formed by vitamin K dependent carboxylation by GGCX. These residues are essential for the binding of calcium.</text>
</comment>
<comment type="similarity">
    <text evidence="8">Belongs to the osteocalcin/matrix Gla protein family.</text>
</comment>
<gene>
    <name evidence="8" type="primary">bglap2</name>
    <name evidence="10" type="synonym">OC2</name>
</gene>